<feature type="chain" id="PRO_0000092218" description="Cytochrome c biogenesis ATP-binding export protein CcmA">
    <location>
        <begin position="1"/>
        <end position="205"/>
    </location>
</feature>
<feature type="domain" description="ABC transporter" evidence="1">
    <location>
        <begin position="2"/>
        <end position="204"/>
    </location>
</feature>
<feature type="binding site" evidence="1">
    <location>
        <begin position="34"/>
        <end position="41"/>
    </location>
    <ligand>
        <name>ATP</name>
        <dbReference type="ChEBI" id="CHEBI:30616"/>
    </ligand>
</feature>
<comment type="function">
    <text evidence="1">Part of the ABC transporter complex CcmAB involved in the biogenesis of c-type cytochromes; once thought to export heme, this seems not to be the case, but its exact role is uncertain. Responsible for energy coupling to the transport system.</text>
</comment>
<comment type="catalytic activity">
    <reaction evidence="1">
        <text>heme b(in) + ATP + H2O = heme b(out) + ADP + phosphate + H(+)</text>
        <dbReference type="Rhea" id="RHEA:19261"/>
        <dbReference type="ChEBI" id="CHEBI:15377"/>
        <dbReference type="ChEBI" id="CHEBI:15378"/>
        <dbReference type="ChEBI" id="CHEBI:30616"/>
        <dbReference type="ChEBI" id="CHEBI:43474"/>
        <dbReference type="ChEBI" id="CHEBI:60344"/>
        <dbReference type="ChEBI" id="CHEBI:456216"/>
        <dbReference type="EC" id="7.6.2.5"/>
    </reaction>
</comment>
<comment type="subunit">
    <text evidence="1">The complex is composed of two ATP-binding proteins (CcmA) and two transmembrane proteins (CcmB).</text>
</comment>
<comment type="subcellular location">
    <subcellularLocation>
        <location evidence="1">Cell inner membrane</location>
        <topology evidence="1">Peripheral membrane protein</topology>
    </subcellularLocation>
</comment>
<comment type="similarity">
    <text evidence="1">Belongs to the ABC transporter superfamily. CcmA exporter (TC 3.A.1.107) family.</text>
</comment>
<dbReference type="EC" id="7.6.2.5" evidence="1"/>
<dbReference type="EMBL" id="BA000031">
    <property type="protein sequence ID" value="BAC60486.1"/>
    <property type="molecule type" value="Genomic_DNA"/>
</dbReference>
<dbReference type="RefSeq" id="NP_798602.1">
    <property type="nucleotide sequence ID" value="NC_004603.1"/>
</dbReference>
<dbReference type="RefSeq" id="WP_005457758.1">
    <property type="nucleotide sequence ID" value="NC_004603.1"/>
</dbReference>
<dbReference type="SMR" id="Q87MK8"/>
<dbReference type="GeneID" id="1189736"/>
<dbReference type="KEGG" id="vpa:VP2223"/>
<dbReference type="PATRIC" id="fig|223926.6.peg.2126"/>
<dbReference type="eggNOG" id="COG4133">
    <property type="taxonomic scope" value="Bacteria"/>
</dbReference>
<dbReference type="HOGENOM" id="CLU_000604_1_2_6"/>
<dbReference type="Proteomes" id="UP000002493">
    <property type="component" value="Chromosome 1"/>
</dbReference>
<dbReference type="GO" id="GO:0005886">
    <property type="term" value="C:plasma membrane"/>
    <property type="evidence" value="ECO:0007669"/>
    <property type="project" value="UniProtKB-SubCell"/>
</dbReference>
<dbReference type="GO" id="GO:0015439">
    <property type="term" value="F:ABC-type heme transporter activity"/>
    <property type="evidence" value="ECO:0007669"/>
    <property type="project" value="UniProtKB-EC"/>
</dbReference>
<dbReference type="GO" id="GO:0005524">
    <property type="term" value="F:ATP binding"/>
    <property type="evidence" value="ECO:0007669"/>
    <property type="project" value="UniProtKB-KW"/>
</dbReference>
<dbReference type="GO" id="GO:0016887">
    <property type="term" value="F:ATP hydrolysis activity"/>
    <property type="evidence" value="ECO:0007669"/>
    <property type="project" value="InterPro"/>
</dbReference>
<dbReference type="GO" id="GO:0017004">
    <property type="term" value="P:cytochrome complex assembly"/>
    <property type="evidence" value="ECO:0007669"/>
    <property type="project" value="UniProtKB-KW"/>
</dbReference>
<dbReference type="Gene3D" id="3.40.50.300">
    <property type="entry name" value="P-loop containing nucleotide triphosphate hydrolases"/>
    <property type="match status" value="1"/>
</dbReference>
<dbReference type="InterPro" id="IPR003593">
    <property type="entry name" value="AAA+_ATPase"/>
</dbReference>
<dbReference type="InterPro" id="IPR003439">
    <property type="entry name" value="ABC_transporter-like_ATP-bd"/>
</dbReference>
<dbReference type="InterPro" id="IPR017871">
    <property type="entry name" value="ABC_transporter-like_CS"/>
</dbReference>
<dbReference type="InterPro" id="IPR005895">
    <property type="entry name" value="ABC_transptr_haem_export_CcmA"/>
</dbReference>
<dbReference type="InterPro" id="IPR027417">
    <property type="entry name" value="P-loop_NTPase"/>
</dbReference>
<dbReference type="NCBIfam" id="TIGR01189">
    <property type="entry name" value="ccmA"/>
    <property type="match status" value="1"/>
</dbReference>
<dbReference type="NCBIfam" id="NF010061">
    <property type="entry name" value="PRK13538.1"/>
    <property type="match status" value="1"/>
</dbReference>
<dbReference type="PANTHER" id="PTHR43499">
    <property type="entry name" value="ABC TRANSPORTER I FAMILY MEMBER 1"/>
    <property type="match status" value="1"/>
</dbReference>
<dbReference type="PANTHER" id="PTHR43499:SF1">
    <property type="entry name" value="ABC TRANSPORTER I FAMILY MEMBER 1"/>
    <property type="match status" value="1"/>
</dbReference>
<dbReference type="Pfam" id="PF00005">
    <property type="entry name" value="ABC_tran"/>
    <property type="match status" value="1"/>
</dbReference>
<dbReference type="SMART" id="SM00382">
    <property type="entry name" value="AAA"/>
    <property type="match status" value="1"/>
</dbReference>
<dbReference type="SUPFAM" id="SSF52540">
    <property type="entry name" value="P-loop containing nucleoside triphosphate hydrolases"/>
    <property type="match status" value="1"/>
</dbReference>
<dbReference type="PROSITE" id="PS00211">
    <property type="entry name" value="ABC_TRANSPORTER_1"/>
    <property type="match status" value="1"/>
</dbReference>
<dbReference type="PROSITE" id="PS50893">
    <property type="entry name" value="ABC_TRANSPORTER_2"/>
    <property type="match status" value="1"/>
</dbReference>
<dbReference type="PROSITE" id="PS51243">
    <property type="entry name" value="CCMA"/>
    <property type="match status" value="1"/>
</dbReference>
<name>CCMA_VIBPA</name>
<reference key="1">
    <citation type="journal article" date="2003" name="Lancet">
        <title>Genome sequence of Vibrio parahaemolyticus: a pathogenic mechanism distinct from that of V. cholerae.</title>
        <authorList>
            <person name="Makino K."/>
            <person name="Oshima K."/>
            <person name="Kurokawa K."/>
            <person name="Yokoyama K."/>
            <person name="Uda T."/>
            <person name="Tagomori K."/>
            <person name="Iijima Y."/>
            <person name="Najima M."/>
            <person name="Nakano M."/>
            <person name="Yamashita A."/>
            <person name="Kubota Y."/>
            <person name="Kimura S."/>
            <person name="Yasunaga T."/>
            <person name="Honda T."/>
            <person name="Shinagawa H."/>
            <person name="Hattori M."/>
            <person name="Iida T."/>
        </authorList>
    </citation>
    <scope>NUCLEOTIDE SEQUENCE [LARGE SCALE GENOMIC DNA]</scope>
    <source>
        <strain>RIMD 2210633</strain>
    </source>
</reference>
<sequence length="205" mass="23112">MLEVSNLTAIRDERVLFENLQFEIKPGELVQIEGRNGTGKTTLLRIITGLGDREEGMIKWKGEEVEKSRDVFHQDLLFLGHQTGVKRELTAFENLRFYQSIQNNSTSDEEIFTALTQVGLAGREDVPVAQLSAGQQRRVALARLWLSKQILWILDEPLTAIDKQGVKVLEALFAQHADNGGIVMLTTHQDMFADSPKLRKIKLGD</sequence>
<protein>
    <recommendedName>
        <fullName evidence="1">Cytochrome c biogenesis ATP-binding export protein CcmA</fullName>
        <ecNumber evidence="1">7.6.2.5</ecNumber>
    </recommendedName>
    <alternativeName>
        <fullName evidence="1">Heme exporter protein A</fullName>
    </alternativeName>
</protein>
<evidence type="ECO:0000255" key="1">
    <source>
        <dbReference type="HAMAP-Rule" id="MF_01707"/>
    </source>
</evidence>
<gene>
    <name evidence="1" type="primary">ccmA</name>
    <name type="ordered locus">VP2223</name>
</gene>
<organism>
    <name type="scientific">Vibrio parahaemolyticus serotype O3:K6 (strain RIMD 2210633)</name>
    <dbReference type="NCBI Taxonomy" id="223926"/>
    <lineage>
        <taxon>Bacteria</taxon>
        <taxon>Pseudomonadati</taxon>
        <taxon>Pseudomonadota</taxon>
        <taxon>Gammaproteobacteria</taxon>
        <taxon>Vibrionales</taxon>
        <taxon>Vibrionaceae</taxon>
        <taxon>Vibrio</taxon>
    </lineage>
</organism>
<accession>Q87MK8</accession>
<proteinExistence type="inferred from homology"/>
<keyword id="KW-0067">ATP-binding</keyword>
<keyword id="KW-0997">Cell inner membrane</keyword>
<keyword id="KW-1003">Cell membrane</keyword>
<keyword id="KW-0201">Cytochrome c-type biogenesis</keyword>
<keyword id="KW-0472">Membrane</keyword>
<keyword id="KW-0547">Nucleotide-binding</keyword>
<keyword id="KW-1278">Translocase</keyword>
<keyword id="KW-0813">Transport</keyword>